<accession>Q6ZM28</accession>
<accession>Q6DH36</accession>
<reference key="1">
    <citation type="journal article" date="2013" name="Nature">
        <title>The zebrafish reference genome sequence and its relationship to the human genome.</title>
        <authorList>
            <person name="Howe K."/>
            <person name="Clark M.D."/>
            <person name="Torroja C.F."/>
            <person name="Torrance J."/>
            <person name="Berthelot C."/>
            <person name="Muffato M."/>
            <person name="Collins J.E."/>
            <person name="Humphray S."/>
            <person name="McLaren K."/>
            <person name="Matthews L."/>
            <person name="McLaren S."/>
            <person name="Sealy I."/>
            <person name="Caccamo M."/>
            <person name="Churcher C."/>
            <person name="Scott C."/>
            <person name="Barrett J.C."/>
            <person name="Koch R."/>
            <person name="Rauch G.J."/>
            <person name="White S."/>
            <person name="Chow W."/>
            <person name="Kilian B."/>
            <person name="Quintais L.T."/>
            <person name="Guerra-Assuncao J.A."/>
            <person name="Zhou Y."/>
            <person name="Gu Y."/>
            <person name="Yen J."/>
            <person name="Vogel J.H."/>
            <person name="Eyre T."/>
            <person name="Redmond S."/>
            <person name="Banerjee R."/>
            <person name="Chi J."/>
            <person name="Fu B."/>
            <person name="Langley E."/>
            <person name="Maguire S.F."/>
            <person name="Laird G.K."/>
            <person name="Lloyd D."/>
            <person name="Kenyon E."/>
            <person name="Donaldson S."/>
            <person name="Sehra H."/>
            <person name="Almeida-King J."/>
            <person name="Loveland J."/>
            <person name="Trevanion S."/>
            <person name="Jones M."/>
            <person name="Quail M."/>
            <person name="Willey D."/>
            <person name="Hunt A."/>
            <person name="Burton J."/>
            <person name="Sims S."/>
            <person name="McLay K."/>
            <person name="Plumb B."/>
            <person name="Davis J."/>
            <person name="Clee C."/>
            <person name="Oliver K."/>
            <person name="Clark R."/>
            <person name="Riddle C."/>
            <person name="Elliot D."/>
            <person name="Threadgold G."/>
            <person name="Harden G."/>
            <person name="Ware D."/>
            <person name="Begum S."/>
            <person name="Mortimore B."/>
            <person name="Kerry G."/>
            <person name="Heath P."/>
            <person name="Phillimore B."/>
            <person name="Tracey A."/>
            <person name="Corby N."/>
            <person name="Dunn M."/>
            <person name="Johnson C."/>
            <person name="Wood J."/>
            <person name="Clark S."/>
            <person name="Pelan S."/>
            <person name="Griffiths G."/>
            <person name="Smith M."/>
            <person name="Glithero R."/>
            <person name="Howden P."/>
            <person name="Barker N."/>
            <person name="Lloyd C."/>
            <person name="Stevens C."/>
            <person name="Harley J."/>
            <person name="Holt K."/>
            <person name="Panagiotidis G."/>
            <person name="Lovell J."/>
            <person name="Beasley H."/>
            <person name="Henderson C."/>
            <person name="Gordon D."/>
            <person name="Auger K."/>
            <person name="Wright D."/>
            <person name="Collins J."/>
            <person name="Raisen C."/>
            <person name="Dyer L."/>
            <person name="Leung K."/>
            <person name="Robertson L."/>
            <person name="Ambridge K."/>
            <person name="Leongamornlert D."/>
            <person name="McGuire S."/>
            <person name="Gilderthorp R."/>
            <person name="Griffiths C."/>
            <person name="Manthravadi D."/>
            <person name="Nichol S."/>
            <person name="Barker G."/>
            <person name="Whitehead S."/>
            <person name="Kay M."/>
            <person name="Brown J."/>
            <person name="Murnane C."/>
            <person name="Gray E."/>
            <person name="Humphries M."/>
            <person name="Sycamore N."/>
            <person name="Barker D."/>
            <person name="Saunders D."/>
            <person name="Wallis J."/>
            <person name="Babbage A."/>
            <person name="Hammond S."/>
            <person name="Mashreghi-Mohammadi M."/>
            <person name="Barr L."/>
            <person name="Martin S."/>
            <person name="Wray P."/>
            <person name="Ellington A."/>
            <person name="Matthews N."/>
            <person name="Ellwood M."/>
            <person name="Woodmansey R."/>
            <person name="Clark G."/>
            <person name="Cooper J."/>
            <person name="Tromans A."/>
            <person name="Grafham D."/>
            <person name="Skuce C."/>
            <person name="Pandian R."/>
            <person name="Andrews R."/>
            <person name="Harrison E."/>
            <person name="Kimberley A."/>
            <person name="Garnett J."/>
            <person name="Fosker N."/>
            <person name="Hall R."/>
            <person name="Garner P."/>
            <person name="Kelly D."/>
            <person name="Bird C."/>
            <person name="Palmer S."/>
            <person name="Gehring I."/>
            <person name="Berger A."/>
            <person name="Dooley C.M."/>
            <person name="Ersan-Urun Z."/>
            <person name="Eser C."/>
            <person name="Geiger H."/>
            <person name="Geisler M."/>
            <person name="Karotki L."/>
            <person name="Kirn A."/>
            <person name="Konantz J."/>
            <person name="Konantz M."/>
            <person name="Oberlander M."/>
            <person name="Rudolph-Geiger S."/>
            <person name="Teucke M."/>
            <person name="Lanz C."/>
            <person name="Raddatz G."/>
            <person name="Osoegawa K."/>
            <person name="Zhu B."/>
            <person name="Rapp A."/>
            <person name="Widaa S."/>
            <person name="Langford C."/>
            <person name="Yang F."/>
            <person name="Schuster S.C."/>
            <person name="Carter N.P."/>
            <person name="Harrow J."/>
            <person name="Ning Z."/>
            <person name="Herrero J."/>
            <person name="Searle S.M."/>
            <person name="Enright A."/>
            <person name="Geisler R."/>
            <person name="Plasterk R.H."/>
            <person name="Lee C."/>
            <person name="Westerfield M."/>
            <person name="de Jong P.J."/>
            <person name="Zon L.I."/>
            <person name="Postlethwait J.H."/>
            <person name="Nusslein-Volhard C."/>
            <person name="Hubbard T.J."/>
            <person name="Roest Crollius H."/>
            <person name="Rogers J."/>
            <person name="Stemple D.L."/>
        </authorList>
    </citation>
    <scope>NUCLEOTIDE SEQUENCE [LARGE SCALE GENOMIC DNA]</scope>
    <source>
        <strain>Tuebingen</strain>
    </source>
</reference>
<reference key="2">
    <citation type="submission" date="2004-07" db="EMBL/GenBank/DDBJ databases">
        <authorList>
            <consortium name="NIH - Zebrafish Gene Collection (ZGC) project"/>
        </authorList>
    </citation>
    <scope>NUCLEOTIDE SEQUENCE [LARGE SCALE MRNA]</scope>
    <source>
        <tissue>Eye</tissue>
    </source>
</reference>
<feature type="chain" id="PRO_0000348580" description="Heme transporter hrg1-B">
    <location>
        <begin position="1"/>
        <end position="144"/>
    </location>
</feature>
<feature type="transmembrane region" description="Helical" evidence="4">
    <location>
        <begin position="6"/>
        <end position="26"/>
    </location>
</feature>
<feature type="transmembrane region" description="Helical" evidence="4">
    <location>
        <begin position="38"/>
        <end position="58"/>
    </location>
</feature>
<feature type="transmembrane region" description="Helical" evidence="4">
    <location>
        <begin position="71"/>
        <end position="91"/>
    </location>
</feature>
<feature type="transmembrane region" description="Helical" evidence="4">
    <location>
        <begin position="107"/>
        <end position="127"/>
    </location>
</feature>
<feature type="short sequence motif" description="Di-leucine motif">
    <location>
        <begin position="140"/>
        <end position="141"/>
    </location>
</feature>
<evidence type="ECO:0000250" key="1">
    <source>
        <dbReference type="UniProtKB" id="Q6P1K1"/>
    </source>
</evidence>
<evidence type="ECO:0000250" key="2">
    <source>
        <dbReference type="UniProtKB" id="Q7T3B2"/>
    </source>
</evidence>
<evidence type="ECO:0000250" key="3">
    <source>
        <dbReference type="UniProtKB" id="Q9D8M3"/>
    </source>
</evidence>
<evidence type="ECO:0000255" key="4"/>
<evidence type="ECO:0000305" key="5"/>
<organism>
    <name type="scientific">Danio rerio</name>
    <name type="common">Zebrafish</name>
    <name type="synonym">Brachydanio rerio</name>
    <dbReference type="NCBI Taxonomy" id="7955"/>
    <lineage>
        <taxon>Eukaryota</taxon>
        <taxon>Metazoa</taxon>
        <taxon>Chordata</taxon>
        <taxon>Craniata</taxon>
        <taxon>Vertebrata</taxon>
        <taxon>Euteleostomi</taxon>
        <taxon>Actinopterygii</taxon>
        <taxon>Neopterygii</taxon>
        <taxon>Teleostei</taxon>
        <taxon>Ostariophysi</taxon>
        <taxon>Cypriniformes</taxon>
        <taxon>Danionidae</taxon>
        <taxon>Danioninae</taxon>
        <taxon>Danio</taxon>
    </lineage>
</organism>
<sequence length="144" mass="16518">MGPNRIYISVGYSTFGMLVGFSAFIVWNVVYKQPWTAAMGGLSGVLALWALVTHIMYIQDYWRTWLKGLKFFMFVSSVFSLLAVAAFATFITLSVIEKQSLSDPKSFYLSAVWSFMTLKWAFLLGLYSYRYRQEFADISILSDF</sequence>
<proteinExistence type="evidence at transcript level"/>
<comment type="function">
    <text evidence="2">Heme transporter that regulates intracellular heme availability through the endosomal or lysosomal compartment. In macrophages, is the heme transporter for heme-iron recycling. Essential for macrophage iron homeostasis, transports heme from the phagolysosome to the cytoplasm during erythrophagocytosis (EP).</text>
</comment>
<comment type="catalytic activity">
    <reaction evidence="2">
        <text>heme b(in) = heme b(out)</text>
        <dbReference type="Rhea" id="RHEA:75443"/>
        <dbReference type="ChEBI" id="CHEBI:60344"/>
    </reaction>
</comment>
<comment type="subcellular location">
    <subcellularLocation>
        <location evidence="1">Endosome membrane</location>
        <topology evidence="1">Multi-pass membrane protein</topology>
    </subcellularLocation>
    <subcellularLocation>
        <location evidence="1">Lysosome membrane</location>
        <topology evidence="1">Multi-pass membrane protein</topology>
    </subcellularLocation>
    <subcellularLocation>
        <location evidence="3">Cytoplasmic vesicle</location>
        <location evidence="3">Phagosome membrane</location>
        <topology evidence="4">Multi-pass membrane protein</topology>
    </subcellularLocation>
    <text evidence="3">In macrophages, specifically localizes to the phagolysosomal membranes during erythrophagocytosis.</text>
</comment>
<comment type="similarity">
    <text evidence="5">Belongs to the HRG family.</text>
</comment>
<name>HRG1B_DANRE</name>
<keyword id="KW-0968">Cytoplasmic vesicle</keyword>
<keyword id="KW-0967">Endosome</keyword>
<keyword id="KW-0458">Lysosome</keyword>
<keyword id="KW-0472">Membrane</keyword>
<keyword id="KW-1185">Reference proteome</keyword>
<keyword id="KW-0812">Transmembrane</keyword>
<keyword id="KW-1133">Transmembrane helix</keyword>
<keyword id="KW-0813">Transport</keyword>
<dbReference type="EMBL" id="AL929087">
    <property type="protein sequence ID" value="CAE51049.2"/>
    <property type="molecule type" value="Genomic_DNA"/>
</dbReference>
<dbReference type="EMBL" id="CR293512">
    <property type="protein sequence ID" value="CAE51049.2"/>
    <property type="status" value="JOINED"/>
    <property type="molecule type" value="Genomic_DNA"/>
</dbReference>
<dbReference type="EMBL" id="BC076146">
    <property type="protein sequence ID" value="AAH76146.1"/>
    <property type="molecule type" value="mRNA"/>
</dbReference>
<dbReference type="RefSeq" id="NP_001002424.1">
    <property type="nucleotide sequence ID" value="NM_001002424.2"/>
</dbReference>
<dbReference type="STRING" id="7955.ENSDARP00000033200"/>
<dbReference type="PaxDb" id="7955-ENSDARP00000033200"/>
<dbReference type="Ensembl" id="ENSDART00000031638">
    <property type="protein sequence ID" value="ENSDARP00000033200"/>
    <property type="gene ID" value="ENSDARG00000026907"/>
</dbReference>
<dbReference type="GeneID" id="436697"/>
<dbReference type="KEGG" id="dre:436697"/>
<dbReference type="AGR" id="ZFIN:ZDB-GENE-040718-121"/>
<dbReference type="CTD" id="436697"/>
<dbReference type="ZFIN" id="ZDB-GENE-040718-121">
    <property type="gene designation" value="slc48a1a"/>
</dbReference>
<dbReference type="eggNOG" id="ENOG502S0AI">
    <property type="taxonomic scope" value="Eukaryota"/>
</dbReference>
<dbReference type="HOGENOM" id="CLU_148774_0_0_1"/>
<dbReference type="InParanoid" id="Q6ZM28"/>
<dbReference type="OMA" id="RQASCGV"/>
<dbReference type="OrthoDB" id="5954402at2759"/>
<dbReference type="PhylomeDB" id="Q6ZM28"/>
<dbReference type="TreeFam" id="TF332621"/>
<dbReference type="PRO" id="PR:Q6ZM28"/>
<dbReference type="Proteomes" id="UP000000437">
    <property type="component" value="Chromosome 23"/>
</dbReference>
<dbReference type="Bgee" id="ENSDARG00000026907">
    <property type="expression patterns" value="Expressed in retina and 19 other cell types or tissues"/>
</dbReference>
<dbReference type="GO" id="GO:0010008">
    <property type="term" value="C:endosome membrane"/>
    <property type="evidence" value="ECO:0007669"/>
    <property type="project" value="UniProtKB-SubCell"/>
</dbReference>
<dbReference type="GO" id="GO:0005765">
    <property type="term" value="C:lysosomal membrane"/>
    <property type="evidence" value="ECO:0000318"/>
    <property type="project" value="GO_Central"/>
</dbReference>
<dbReference type="GO" id="GO:0005764">
    <property type="term" value="C:lysosome"/>
    <property type="evidence" value="ECO:0000314"/>
    <property type="project" value="ZFIN"/>
</dbReference>
<dbReference type="GO" id="GO:0030670">
    <property type="term" value="C:phagocytic vesicle membrane"/>
    <property type="evidence" value="ECO:0007669"/>
    <property type="project" value="UniProtKB-SubCell"/>
</dbReference>
<dbReference type="GO" id="GO:0005886">
    <property type="term" value="C:plasma membrane"/>
    <property type="evidence" value="ECO:0000318"/>
    <property type="project" value="GO_Central"/>
</dbReference>
<dbReference type="GO" id="GO:0020037">
    <property type="term" value="F:heme binding"/>
    <property type="evidence" value="ECO:0000318"/>
    <property type="project" value="GO_Central"/>
</dbReference>
<dbReference type="GO" id="GO:0015232">
    <property type="term" value="F:heme transmembrane transporter activity"/>
    <property type="evidence" value="ECO:0000314"/>
    <property type="project" value="ZFIN"/>
</dbReference>
<dbReference type="GO" id="GO:0015886">
    <property type="term" value="P:heme transport"/>
    <property type="evidence" value="ECO:0000318"/>
    <property type="project" value="GO_Central"/>
</dbReference>
<dbReference type="InterPro" id="IPR026218">
    <property type="entry name" value="HRG"/>
</dbReference>
<dbReference type="PANTHER" id="PTHR31525">
    <property type="entry name" value="HEME TRANSPORTER HRG1"/>
    <property type="match status" value="1"/>
</dbReference>
<dbReference type="PANTHER" id="PTHR31525:SF1">
    <property type="entry name" value="HEME TRANSPORTER HRG1"/>
    <property type="match status" value="1"/>
</dbReference>
<dbReference type="Pfam" id="PF16954">
    <property type="entry name" value="HRG"/>
    <property type="match status" value="2"/>
</dbReference>
<dbReference type="PRINTS" id="PR02095">
    <property type="entry name" value="TRNSPORTRHRG"/>
</dbReference>
<protein>
    <recommendedName>
        <fullName>Heme transporter hrg1-B</fullName>
    </recommendedName>
    <alternativeName>
        <fullName>Heme-responsive gene 1 protein homolog B</fullName>
        <shortName>HRG-1B</shortName>
    </alternativeName>
    <alternativeName>
        <fullName>Solute carrier family 48 member 1-A</fullName>
    </alternativeName>
</protein>
<gene>
    <name type="primary">slc48a1a</name>
    <name type="synonym">hrg1b</name>
    <name type="ORF">si:ch211-226m16.1</name>
    <name type="ORF">zgc:92662</name>
</gene>